<accession>Q5XIX3</accession>
<accession>Q8K4H7</accession>
<proteinExistence type="evidence at protein level"/>
<gene>
    <name type="primary">Dclre1c</name>
    <name type="synonym">Snm1l</name>
</gene>
<feature type="chain" id="PRO_0000209125" description="Protein artemis">
    <location>
        <begin position="1"/>
        <end position="698"/>
    </location>
</feature>
<feature type="region of interest" description="Disordered" evidence="4">
    <location>
        <begin position="445"/>
        <end position="485"/>
    </location>
</feature>
<feature type="region of interest" description="Disordered" evidence="4">
    <location>
        <begin position="505"/>
        <end position="595"/>
    </location>
</feature>
<feature type="region of interest" description="Disordered" evidence="4">
    <location>
        <begin position="620"/>
        <end position="669"/>
    </location>
</feature>
<feature type="compositionally biased region" description="Acidic residues" evidence="4">
    <location>
        <begin position="449"/>
        <end position="461"/>
    </location>
</feature>
<feature type="compositionally biased region" description="Polar residues" evidence="4">
    <location>
        <begin position="508"/>
        <end position="521"/>
    </location>
</feature>
<feature type="compositionally biased region" description="Low complexity" evidence="4">
    <location>
        <begin position="538"/>
        <end position="551"/>
    </location>
</feature>
<feature type="compositionally biased region" description="Polar residues" evidence="4">
    <location>
        <begin position="552"/>
        <end position="583"/>
    </location>
</feature>
<feature type="compositionally biased region" description="Low complexity" evidence="4">
    <location>
        <begin position="641"/>
        <end position="655"/>
    </location>
</feature>
<feature type="modified residue" description="Phosphothreonine" evidence="2">
    <location>
        <position position="380"/>
    </location>
</feature>
<feature type="modified residue" description="Phosphoserine" evidence="6">
    <location>
        <position position="385"/>
    </location>
</feature>
<feature type="modified residue" description="Phosphoserine; by ATM" evidence="3">
    <location>
        <position position="650"/>
    </location>
</feature>
<feature type="sequence conflict" description="In Ref. 1; AAM89124." evidence="5" ref="1">
    <original>P</original>
    <variation>S</variation>
    <location>
        <position position="623"/>
    </location>
</feature>
<keyword id="KW-1064">Adaptive immunity</keyword>
<keyword id="KW-0227">DNA damage</keyword>
<keyword id="KW-0233">DNA recombination</keyword>
<keyword id="KW-0234">DNA repair</keyword>
<keyword id="KW-0255">Endonuclease</keyword>
<keyword id="KW-0269">Exonuclease</keyword>
<keyword id="KW-0378">Hydrolase</keyword>
<keyword id="KW-0391">Immunity</keyword>
<keyword id="KW-0460">Magnesium</keyword>
<keyword id="KW-0540">Nuclease</keyword>
<keyword id="KW-0539">Nucleus</keyword>
<keyword id="KW-0597">Phosphoprotein</keyword>
<keyword id="KW-1185">Reference proteome</keyword>
<evidence type="ECO:0000250" key="1"/>
<evidence type="ECO:0000250" key="2">
    <source>
        <dbReference type="UniProtKB" id="Q8K4J0"/>
    </source>
</evidence>
<evidence type="ECO:0000250" key="3">
    <source>
        <dbReference type="UniProtKB" id="Q96SD1"/>
    </source>
</evidence>
<evidence type="ECO:0000256" key="4">
    <source>
        <dbReference type="SAM" id="MobiDB-lite"/>
    </source>
</evidence>
<evidence type="ECO:0000305" key="5"/>
<evidence type="ECO:0007744" key="6">
    <source>
    </source>
</evidence>
<protein>
    <recommendedName>
        <fullName>Protein artemis</fullName>
        <ecNumber>3.1.-.-</ecNumber>
    </recommendedName>
    <alternativeName>
        <fullName>DNA cross-link repair 1C protein</fullName>
    </alternativeName>
    <alternativeName>
        <fullName>SNM1-like protein</fullName>
    </alternativeName>
</protein>
<reference key="1">
    <citation type="submission" date="2001-06" db="EMBL/GenBank/DDBJ databases">
        <title>The mouse and rat SNM1-like genes, cloning, expression and mapping.</title>
        <authorList>
            <person name="Li L."/>
            <person name="Zhou Y."/>
            <person name="Xie G."/>
            <person name="Cowan M.J."/>
        </authorList>
    </citation>
    <scope>NUCLEOTIDE SEQUENCE [MRNA]</scope>
</reference>
<reference key="2">
    <citation type="journal article" date="2004" name="Genome Res.">
        <title>The status, quality, and expansion of the NIH full-length cDNA project: the Mammalian Gene Collection (MGC).</title>
        <authorList>
            <consortium name="The MGC Project Team"/>
        </authorList>
    </citation>
    <scope>NUCLEOTIDE SEQUENCE [LARGE SCALE MRNA]</scope>
    <source>
        <tissue>Testis</tissue>
    </source>
</reference>
<reference key="3">
    <citation type="journal article" date="2012" name="Nat. Commun.">
        <title>Quantitative maps of protein phosphorylation sites across 14 different rat organs and tissues.</title>
        <authorList>
            <person name="Lundby A."/>
            <person name="Secher A."/>
            <person name="Lage K."/>
            <person name="Nordsborg N.B."/>
            <person name="Dmytriyev A."/>
            <person name="Lundby C."/>
            <person name="Olsen J.V."/>
        </authorList>
    </citation>
    <scope>PHOSPHORYLATION [LARGE SCALE ANALYSIS] AT SER-385</scope>
    <scope>IDENTIFICATION BY MASS SPECTROMETRY [LARGE SCALE ANALYSIS]</scope>
</reference>
<organism>
    <name type="scientific">Rattus norvegicus</name>
    <name type="common">Rat</name>
    <dbReference type="NCBI Taxonomy" id="10116"/>
    <lineage>
        <taxon>Eukaryota</taxon>
        <taxon>Metazoa</taxon>
        <taxon>Chordata</taxon>
        <taxon>Craniata</taxon>
        <taxon>Vertebrata</taxon>
        <taxon>Euteleostomi</taxon>
        <taxon>Mammalia</taxon>
        <taxon>Eutheria</taxon>
        <taxon>Euarchontoglires</taxon>
        <taxon>Glires</taxon>
        <taxon>Rodentia</taxon>
        <taxon>Myomorpha</taxon>
        <taxon>Muroidea</taxon>
        <taxon>Muridae</taxon>
        <taxon>Murinae</taxon>
        <taxon>Rattus</taxon>
    </lineage>
</organism>
<comment type="function">
    <text evidence="1">Required for V(D)J recombination, the process by which exons encoding the antigen-binding domains of immunoglobulins and T-cell receptor proteins are assembled from individual V, (D), and J gene segments. V(D)J recombination is initiated by the lymphoid specific RAG endonuclease complex, which generates site specific DNA double strand breaks (DSBs). These DSBs present two types of DNA end structures: hairpin sealed coding ends and phosphorylated blunt signal ends. These ends are independently repaired by the non homologous end joining (NHEJ) pathway to form coding and signal joints respectively. This protein exhibits single-strand specific 5'-3' exonuclease activity in isolation, and acquires endonucleolytic activity on 5' and 3' hairpins and overhangs when in a complex with PRKDC. The latter activity is required specifically for the resolution of closed hairpins prior to the formation of the coding joint. May also be required for the repair of complex DSBs induced by ionizing radiation, which require substantial end-processing prior to religation by NHEJ (By similarity).</text>
</comment>
<comment type="subunit">
    <text evidence="3">Interacts with LIG4; the interaction is direct. Interacts with ATM. Interacts with BRCA1. Interacts with PRKDC. Interacts with TP53BP1. Also exhibits ATM- and phosphorylation-dependent interaction with the MRN complex, composed of MRE11, RAD50, and NBN.</text>
</comment>
<comment type="subcellular location">
    <subcellularLocation>
        <location evidence="1">Nucleus</location>
    </subcellularLocation>
</comment>
<comment type="PTM">
    <text evidence="1">Phosphorylation on undefined residues by PRKDC may stimulate endonucleolytic activity on 5' and 3' hairpins and overhangs. PRKDC must remain present, even after phosphorylation, for efficient hairpin opening. Also phosphorylated by ATM in response to ionizing radiation (IR) and by ATR in response to ultraviolet (UV) radiation (By similarity).</text>
</comment>
<comment type="similarity">
    <text evidence="5">Belongs to the DNA repair metallo-beta-lactamase (DRMBL) family.</text>
</comment>
<comment type="sequence caution" evidence="5">
    <conflict type="frameshift">
        <sequence resource="EMBL-CDS" id="AAM89124"/>
    </conflict>
</comment>
<sequence length="698" mass="78189">MSSFQGQMEEYPTISIDRFDRENLKARAYFLSHCHKDHMKGLRAPSMKRRLECSLKVFLYCSPVTKELLLTSPKYKFWENRIIAIEIETPTQVSLVDEASGEKEEVVVTLLPAGHCPGSVMFLFQGSNGTVLYTGDFRLAKGEVSRMELLHSGGRVKDIQSVYLDTTFCDPRFYQIPSREECLRGVLELVRSWITRSPKHVVWLNCKAAYGYEYLFTNLSEELGVQVHVDKLDMFKNMPDILHHLTTDRNTQIHACRHPKAEEYFQWNKLPCGMASKTKTVLHTISIKPSTMWFGERTRKTNVIVRTGESSYRACFSFHSSYSEIKDFLSYICPVNAYPNVIPIGLTVDKVMDFLKPLCRSSQCAEPKYKPLGKLKRARTVHLDSEEDDDLFDDPLLTHSRRKVPYQVTLHPEVFSMKALPLDQPELGQSPGCCKAESMPSPSLANFVDCDESNSDSEGELETPPSLQGGLGPTTLPQQNADPDVDVPRWEVFFKRKDEITDECLENLPSSIETGGSQSPKRFSDSPKLGSDSDGESTHISSQNSSQSTHITDQGSQGWDSQCDTVLLSSQEKSGGDSTSLNKDTYKPKPKDSISASQIEQNALCPQDTHCDLKSGAEVNGVPCIEEPDTVSGRKSSPEKTSLTSTQADSQSSSDFEIPSTPEAELPKPEHLQFLYGKLATGESIVLKKENVHSQIFK</sequence>
<name>DCR1C_RAT</name>
<dbReference type="EC" id="3.1.-.-"/>
<dbReference type="EMBL" id="AF395746">
    <property type="protein sequence ID" value="AAM89124.1"/>
    <property type="status" value="ALT_FRAME"/>
    <property type="molecule type" value="mRNA"/>
</dbReference>
<dbReference type="EMBL" id="BC083546">
    <property type="protein sequence ID" value="AAH83546.1"/>
    <property type="molecule type" value="mRNA"/>
</dbReference>
<dbReference type="RefSeq" id="NP_671486.2">
    <property type="nucleotide sequence ID" value="NM_147145.2"/>
</dbReference>
<dbReference type="SMR" id="Q5XIX3"/>
<dbReference type="FunCoup" id="Q5XIX3">
    <property type="interactions" value="2106"/>
</dbReference>
<dbReference type="STRING" id="10116.ENSRNOP00000021506"/>
<dbReference type="iPTMnet" id="Q5XIX3"/>
<dbReference type="PhosphoSitePlus" id="Q5XIX3"/>
<dbReference type="PaxDb" id="10116-ENSRNOP00000021506"/>
<dbReference type="GeneID" id="259171"/>
<dbReference type="KEGG" id="rno:259171"/>
<dbReference type="UCSC" id="RGD:708574">
    <property type="organism name" value="rat"/>
</dbReference>
<dbReference type="AGR" id="RGD:708574"/>
<dbReference type="CTD" id="64421"/>
<dbReference type="RGD" id="708574">
    <property type="gene designation" value="Dclre1c"/>
</dbReference>
<dbReference type="VEuPathDB" id="HostDB:ENSRNOG00000015980"/>
<dbReference type="eggNOG" id="KOG1361">
    <property type="taxonomic scope" value="Eukaryota"/>
</dbReference>
<dbReference type="HOGENOM" id="CLU_029238_0_0_1"/>
<dbReference type="InParanoid" id="Q5XIX3"/>
<dbReference type="OrthoDB" id="68951at9989"/>
<dbReference type="PhylomeDB" id="Q5XIX3"/>
<dbReference type="TreeFam" id="TF329572"/>
<dbReference type="Reactome" id="R-RNO-5693571">
    <property type="pathway name" value="Nonhomologous End-Joining (NHEJ)"/>
</dbReference>
<dbReference type="PRO" id="PR:Q5XIX3"/>
<dbReference type="Proteomes" id="UP000002494">
    <property type="component" value="Chromosome 17"/>
</dbReference>
<dbReference type="Bgee" id="ENSRNOG00000015980">
    <property type="expression patterns" value="Expressed in thymus and 19 other cell types or tissues"/>
</dbReference>
<dbReference type="GO" id="GO:0070419">
    <property type="term" value="C:nonhomologous end joining complex"/>
    <property type="evidence" value="ECO:0000250"/>
    <property type="project" value="UniProtKB"/>
</dbReference>
<dbReference type="GO" id="GO:0005634">
    <property type="term" value="C:nucleus"/>
    <property type="evidence" value="ECO:0007669"/>
    <property type="project" value="UniProtKB-SubCell"/>
</dbReference>
<dbReference type="GO" id="GO:0035312">
    <property type="term" value="F:5'-3' DNA exonuclease activity"/>
    <property type="evidence" value="ECO:0000318"/>
    <property type="project" value="GO_Central"/>
</dbReference>
<dbReference type="GO" id="GO:0008409">
    <property type="term" value="F:5'-3' exonuclease activity"/>
    <property type="evidence" value="ECO:0000266"/>
    <property type="project" value="RGD"/>
</dbReference>
<dbReference type="GO" id="GO:0003684">
    <property type="term" value="F:damaged DNA binding"/>
    <property type="evidence" value="ECO:0000318"/>
    <property type="project" value="GO_Central"/>
</dbReference>
<dbReference type="GO" id="GO:0000014">
    <property type="term" value="F:single-stranded DNA endodeoxyribonuclease activity"/>
    <property type="evidence" value="ECO:0000266"/>
    <property type="project" value="RGD"/>
</dbReference>
<dbReference type="GO" id="GO:0002250">
    <property type="term" value="P:adaptive immune response"/>
    <property type="evidence" value="ECO:0007669"/>
    <property type="project" value="UniProtKB-KW"/>
</dbReference>
<dbReference type="GO" id="GO:0030183">
    <property type="term" value="P:B cell differentiation"/>
    <property type="evidence" value="ECO:0000266"/>
    <property type="project" value="RGD"/>
</dbReference>
<dbReference type="GO" id="GO:0051276">
    <property type="term" value="P:chromosome organization"/>
    <property type="evidence" value="ECO:0000266"/>
    <property type="project" value="RGD"/>
</dbReference>
<dbReference type="GO" id="GO:0006310">
    <property type="term" value="P:DNA recombination"/>
    <property type="evidence" value="ECO:0000266"/>
    <property type="project" value="RGD"/>
</dbReference>
<dbReference type="GO" id="GO:0006302">
    <property type="term" value="P:double-strand break repair"/>
    <property type="evidence" value="ECO:0000266"/>
    <property type="project" value="RGD"/>
</dbReference>
<dbReference type="GO" id="GO:0006303">
    <property type="term" value="P:double-strand break repair via nonhomologous end joining"/>
    <property type="evidence" value="ECO:0000318"/>
    <property type="project" value="GO_Central"/>
</dbReference>
<dbReference type="GO" id="GO:0036297">
    <property type="term" value="P:interstrand cross-link repair"/>
    <property type="evidence" value="ECO:0000318"/>
    <property type="project" value="GO_Central"/>
</dbReference>
<dbReference type="GO" id="GO:0010212">
    <property type="term" value="P:response to ionizing radiation"/>
    <property type="evidence" value="ECO:0000266"/>
    <property type="project" value="RGD"/>
</dbReference>
<dbReference type="GO" id="GO:0000723">
    <property type="term" value="P:telomere maintenance"/>
    <property type="evidence" value="ECO:0000266"/>
    <property type="project" value="RGD"/>
</dbReference>
<dbReference type="GO" id="GO:0033151">
    <property type="term" value="P:V(D)J recombination"/>
    <property type="evidence" value="ECO:0000266"/>
    <property type="project" value="RGD"/>
</dbReference>
<dbReference type="CDD" id="cd16297">
    <property type="entry name" value="artemis-SNM1C-like_MBL-fold"/>
    <property type="match status" value="1"/>
</dbReference>
<dbReference type="FunFam" id="3.40.50.12650:FF:000002">
    <property type="entry name" value="DNA cross-link repair 1C"/>
    <property type="match status" value="1"/>
</dbReference>
<dbReference type="FunFam" id="3.60.15.10:FF:000018">
    <property type="entry name" value="DNA cross-link repair 1C"/>
    <property type="match status" value="1"/>
</dbReference>
<dbReference type="Gene3D" id="3.40.50.12650">
    <property type="match status" value="1"/>
</dbReference>
<dbReference type="Gene3D" id="3.60.15.10">
    <property type="entry name" value="Ribonuclease Z/Hydroxyacylglutathione hydrolase-like"/>
    <property type="match status" value="1"/>
</dbReference>
<dbReference type="InterPro" id="IPR011084">
    <property type="entry name" value="DRMBL"/>
</dbReference>
<dbReference type="InterPro" id="IPR036866">
    <property type="entry name" value="RibonucZ/Hydroxyglut_hydro"/>
</dbReference>
<dbReference type="PANTHER" id="PTHR23240">
    <property type="entry name" value="DNA CROSS-LINK REPAIR PROTEIN PSO2/SNM1-RELATED"/>
    <property type="match status" value="1"/>
</dbReference>
<dbReference type="PANTHER" id="PTHR23240:SF8">
    <property type="entry name" value="PROTEIN ARTEMIS"/>
    <property type="match status" value="1"/>
</dbReference>
<dbReference type="Pfam" id="PF07522">
    <property type="entry name" value="DRMBL"/>
    <property type="match status" value="1"/>
</dbReference>
<dbReference type="SUPFAM" id="SSF56281">
    <property type="entry name" value="Metallo-hydrolase/oxidoreductase"/>
    <property type="match status" value="1"/>
</dbReference>